<name>RLMH_RHOPT</name>
<sequence>MRLLILAVGKLKQGPERELAERYRARFDDLGRKLGFRGLDVHEIAESRAREAPARMAEEAAAIIAQVQDGAVLVTLDERGQSLGSTAFAAQLGRWRDEQVPGTIFVIGGADGLLPELRRKAKLSMSFGGATWPHQMVRVMLLEQIYRAATILAGHPYHRA</sequence>
<proteinExistence type="inferred from homology"/>
<protein>
    <recommendedName>
        <fullName evidence="1">Ribosomal RNA large subunit methyltransferase H</fullName>
        <ecNumber evidence="1">2.1.1.177</ecNumber>
    </recommendedName>
    <alternativeName>
        <fullName evidence="1">23S rRNA (pseudouridine1915-N3)-methyltransferase</fullName>
    </alternativeName>
    <alternativeName>
        <fullName evidence="1">23S rRNA m3Psi1915 methyltransferase</fullName>
    </alternativeName>
    <alternativeName>
        <fullName evidence="1">rRNA (pseudouridine-N3-)-methyltransferase RlmH</fullName>
    </alternativeName>
</protein>
<evidence type="ECO:0000255" key="1">
    <source>
        <dbReference type="HAMAP-Rule" id="MF_00658"/>
    </source>
</evidence>
<gene>
    <name evidence="1" type="primary">rlmH</name>
    <name type="ordered locus">Rpal_0162</name>
</gene>
<organism>
    <name type="scientific">Rhodopseudomonas palustris (strain TIE-1)</name>
    <dbReference type="NCBI Taxonomy" id="395960"/>
    <lineage>
        <taxon>Bacteria</taxon>
        <taxon>Pseudomonadati</taxon>
        <taxon>Pseudomonadota</taxon>
        <taxon>Alphaproteobacteria</taxon>
        <taxon>Hyphomicrobiales</taxon>
        <taxon>Nitrobacteraceae</taxon>
        <taxon>Rhodopseudomonas</taxon>
    </lineage>
</organism>
<keyword id="KW-0963">Cytoplasm</keyword>
<keyword id="KW-0489">Methyltransferase</keyword>
<keyword id="KW-0698">rRNA processing</keyword>
<keyword id="KW-0949">S-adenosyl-L-methionine</keyword>
<keyword id="KW-0808">Transferase</keyword>
<reference key="1">
    <citation type="submission" date="2008-05" db="EMBL/GenBank/DDBJ databases">
        <title>Complete sequence of Rhodopseudomonas palustris TIE-1.</title>
        <authorList>
            <consortium name="US DOE Joint Genome Institute"/>
            <person name="Lucas S."/>
            <person name="Copeland A."/>
            <person name="Lapidus A."/>
            <person name="Glavina del Rio T."/>
            <person name="Dalin E."/>
            <person name="Tice H."/>
            <person name="Pitluck S."/>
            <person name="Chain P."/>
            <person name="Malfatti S."/>
            <person name="Shin M."/>
            <person name="Vergez L."/>
            <person name="Lang D."/>
            <person name="Schmutz J."/>
            <person name="Larimer F."/>
            <person name="Land M."/>
            <person name="Hauser L."/>
            <person name="Kyrpides N."/>
            <person name="Mikhailova N."/>
            <person name="Emerson D."/>
            <person name="Newman D.K."/>
            <person name="Roden E."/>
            <person name="Richardson P."/>
        </authorList>
    </citation>
    <scope>NUCLEOTIDE SEQUENCE [LARGE SCALE GENOMIC DNA]</scope>
    <source>
        <strain>TIE-1</strain>
    </source>
</reference>
<accession>B3Q736</accession>
<dbReference type="EC" id="2.1.1.177" evidence="1"/>
<dbReference type="EMBL" id="CP001096">
    <property type="protein sequence ID" value="ACE98724.1"/>
    <property type="molecule type" value="Genomic_DNA"/>
</dbReference>
<dbReference type="RefSeq" id="WP_012493960.1">
    <property type="nucleotide sequence ID" value="NC_011004.1"/>
</dbReference>
<dbReference type="SMR" id="B3Q736"/>
<dbReference type="KEGG" id="rpt:Rpal_0162"/>
<dbReference type="HOGENOM" id="CLU_100552_1_1_5"/>
<dbReference type="OrthoDB" id="9806643at2"/>
<dbReference type="Proteomes" id="UP000001725">
    <property type="component" value="Chromosome"/>
</dbReference>
<dbReference type="GO" id="GO:0005737">
    <property type="term" value="C:cytoplasm"/>
    <property type="evidence" value="ECO:0007669"/>
    <property type="project" value="UniProtKB-SubCell"/>
</dbReference>
<dbReference type="GO" id="GO:0070038">
    <property type="term" value="F:rRNA (pseudouridine-N3-)-methyltransferase activity"/>
    <property type="evidence" value="ECO:0007669"/>
    <property type="project" value="UniProtKB-UniRule"/>
</dbReference>
<dbReference type="CDD" id="cd18081">
    <property type="entry name" value="RlmH-like"/>
    <property type="match status" value="1"/>
</dbReference>
<dbReference type="Gene3D" id="3.40.1280.10">
    <property type="match status" value="1"/>
</dbReference>
<dbReference type="HAMAP" id="MF_00658">
    <property type="entry name" value="23SrRNA_methyltr_H"/>
    <property type="match status" value="1"/>
</dbReference>
<dbReference type="InterPro" id="IPR029028">
    <property type="entry name" value="Alpha/beta_knot_MTases"/>
</dbReference>
<dbReference type="InterPro" id="IPR003742">
    <property type="entry name" value="RlmH-like"/>
</dbReference>
<dbReference type="InterPro" id="IPR029026">
    <property type="entry name" value="tRNA_m1G_MTases_N"/>
</dbReference>
<dbReference type="NCBIfam" id="NF000989">
    <property type="entry name" value="PRK00103.2-3"/>
    <property type="match status" value="1"/>
</dbReference>
<dbReference type="NCBIfam" id="NF000991">
    <property type="entry name" value="PRK00103.2-5"/>
    <property type="match status" value="1"/>
</dbReference>
<dbReference type="PANTHER" id="PTHR33603">
    <property type="entry name" value="METHYLTRANSFERASE"/>
    <property type="match status" value="1"/>
</dbReference>
<dbReference type="PANTHER" id="PTHR33603:SF1">
    <property type="entry name" value="RIBOSOMAL RNA LARGE SUBUNIT METHYLTRANSFERASE H"/>
    <property type="match status" value="1"/>
</dbReference>
<dbReference type="Pfam" id="PF02590">
    <property type="entry name" value="SPOUT_MTase"/>
    <property type="match status" value="1"/>
</dbReference>
<dbReference type="PIRSF" id="PIRSF004505">
    <property type="entry name" value="MT_bac"/>
    <property type="match status" value="1"/>
</dbReference>
<dbReference type="SUPFAM" id="SSF75217">
    <property type="entry name" value="alpha/beta knot"/>
    <property type="match status" value="1"/>
</dbReference>
<comment type="function">
    <text evidence="1">Specifically methylates the pseudouridine at position 1915 (m3Psi1915) in 23S rRNA.</text>
</comment>
<comment type="catalytic activity">
    <reaction evidence="1">
        <text>pseudouridine(1915) in 23S rRNA + S-adenosyl-L-methionine = N(3)-methylpseudouridine(1915) in 23S rRNA + S-adenosyl-L-homocysteine + H(+)</text>
        <dbReference type="Rhea" id="RHEA:42752"/>
        <dbReference type="Rhea" id="RHEA-COMP:10221"/>
        <dbReference type="Rhea" id="RHEA-COMP:10222"/>
        <dbReference type="ChEBI" id="CHEBI:15378"/>
        <dbReference type="ChEBI" id="CHEBI:57856"/>
        <dbReference type="ChEBI" id="CHEBI:59789"/>
        <dbReference type="ChEBI" id="CHEBI:65314"/>
        <dbReference type="ChEBI" id="CHEBI:74486"/>
        <dbReference type="EC" id="2.1.1.177"/>
    </reaction>
</comment>
<comment type="subunit">
    <text evidence="1">Homodimer.</text>
</comment>
<comment type="subcellular location">
    <subcellularLocation>
        <location evidence="1">Cytoplasm</location>
    </subcellularLocation>
</comment>
<comment type="similarity">
    <text evidence="1">Belongs to the RNA methyltransferase RlmH family.</text>
</comment>
<feature type="chain" id="PRO_0000366646" description="Ribosomal RNA large subunit methyltransferase H">
    <location>
        <begin position="1"/>
        <end position="160"/>
    </location>
</feature>
<feature type="binding site" evidence="1">
    <location>
        <position position="76"/>
    </location>
    <ligand>
        <name>S-adenosyl-L-methionine</name>
        <dbReference type="ChEBI" id="CHEBI:59789"/>
    </ligand>
</feature>
<feature type="binding site" evidence="1">
    <location>
        <position position="108"/>
    </location>
    <ligand>
        <name>S-adenosyl-L-methionine</name>
        <dbReference type="ChEBI" id="CHEBI:59789"/>
    </ligand>
</feature>